<comment type="function">
    <text evidence="1">Binds to the 23S rRNA.</text>
</comment>
<comment type="cofactor">
    <cofactor evidence="1">
        <name>Zn(2+)</name>
        <dbReference type="ChEBI" id="CHEBI:29105"/>
    </cofactor>
    <text evidence="1">Binds 1 zinc ion per subunit.</text>
</comment>
<comment type="subunit">
    <text evidence="1">Part of the 50S ribosomal subunit.</text>
</comment>
<comment type="similarity">
    <text evidence="1">Belongs to the eukaryotic ribosomal protein eL42 family.</text>
</comment>
<gene>
    <name evidence="1" type="primary">rpl44e</name>
    <name type="ordered locus">MTH_1310</name>
</gene>
<feature type="chain" id="PRO_0000149152" description="Large ribosomal subunit protein eL42">
    <location>
        <begin position="1"/>
        <end position="92"/>
    </location>
</feature>
<feature type="zinc finger region" description="C4-type" evidence="1">
    <location>
        <begin position="11"/>
        <end position="73"/>
    </location>
</feature>
<feature type="binding site" evidence="1">
    <location>
        <position position="11"/>
    </location>
    <ligand>
        <name>Zn(2+)</name>
        <dbReference type="ChEBI" id="CHEBI:29105"/>
    </ligand>
</feature>
<feature type="binding site" evidence="1">
    <location>
        <position position="14"/>
    </location>
    <ligand>
        <name>Zn(2+)</name>
        <dbReference type="ChEBI" id="CHEBI:29105"/>
    </ligand>
</feature>
<feature type="binding site" evidence="1">
    <location>
        <position position="70"/>
    </location>
    <ligand>
        <name>Zn(2+)</name>
        <dbReference type="ChEBI" id="CHEBI:29105"/>
    </ligand>
</feature>
<feature type="binding site" evidence="1">
    <location>
        <position position="73"/>
    </location>
    <ligand>
        <name>Zn(2+)</name>
        <dbReference type="ChEBI" id="CHEBI:29105"/>
    </ligand>
</feature>
<organism>
    <name type="scientific">Methanothermobacter thermautotrophicus (strain ATCC 29096 / DSM 1053 / JCM 10044 / NBRC 100330 / Delta H)</name>
    <name type="common">Methanobacterium thermoautotrophicum</name>
    <dbReference type="NCBI Taxonomy" id="187420"/>
    <lineage>
        <taxon>Archaea</taxon>
        <taxon>Methanobacteriati</taxon>
        <taxon>Methanobacteriota</taxon>
        <taxon>Methanomada group</taxon>
        <taxon>Methanobacteria</taxon>
        <taxon>Methanobacteriales</taxon>
        <taxon>Methanobacteriaceae</taxon>
        <taxon>Methanothermobacter</taxon>
    </lineage>
</organism>
<reference key="1">
    <citation type="journal article" date="1997" name="J. Bacteriol.">
        <title>Complete genome sequence of Methanobacterium thermoautotrophicum deltaH: functional analysis and comparative genomics.</title>
        <authorList>
            <person name="Smith D.R."/>
            <person name="Doucette-Stamm L.A."/>
            <person name="Deloughery C."/>
            <person name="Lee H.-M."/>
            <person name="Dubois J."/>
            <person name="Aldredge T."/>
            <person name="Bashirzadeh R."/>
            <person name="Blakely D."/>
            <person name="Cook R."/>
            <person name="Gilbert K."/>
            <person name="Harrison D."/>
            <person name="Hoang L."/>
            <person name="Keagle P."/>
            <person name="Lumm W."/>
            <person name="Pothier B."/>
            <person name="Qiu D."/>
            <person name="Spadafora R."/>
            <person name="Vicare R."/>
            <person name="Wang Y."/>
            <person name="Wierzbowski J."/>
            <person name="Gibson R."/>
            <person name="Jiwani N."/>
            <person name="Caruso A."/>
            <person name="Bush D."/>
            <person name="Safer H."/>
            <person name="Patwell D."/>
            <person name="Prabhakar S."/>
            <person name="McDougall S."/>
            <person name="Shimer G."/>
            <person name="Goyal A."/>
            <person name="Pietrovski S."/>
            <person name="Church G.M."/>
            <person name="Daniels C.J."/>
            <person name="Mao J.-I."/>
            <person name="Rice P."/>
            <person name="Noelling J."/>
            <person name="Reeve J.N."/>
        </authorList>
    </citation>
    <scope>NUCLEOTIDE SEQUENCE [LARGE SCALE GENOMIC DNA]</scope>
    <source>
        <strain>ATCC 29096 / DSM 1053 / JCM 10044 / NBRC 100330 / Delta H</strain>
    </source>
</reference>
<protein>
    <recommendedName>
        <fullName evidence="1">Large ribosomal subunit protein eL42</fullName>
    </recommendedName>
    <alternativeName>
        <fullName evidence="2">50S ribosomal protein L44e</fullName>
    </alternativeName>
</protein>
<evidence type="ECO:0000255" key="1">
    <source>
        <dbReference type="HAMAP-Rule" id="MF_01476"/>
    </source>
</evidence>
<evidence type="ECO:0000305" key="2"/>
<dbReference type="EMBL" id="AE000666">
    <property type="protein sequence ID" value="AAB85788.1"/>
    <property type="molecule type" value="Genomic_DNA"/>
</dbReference>
<dbReference type="PIR" id="B69041">
    <property type="entry name" value="B69041"/>
</dbReference>
<dbReference type="RefSeq" id="WP_010876923.1">
    <property type="nucleotide sequence ID" value="NC_000916.1"/>
</dbReference>
<dbReference type="SMR" id="O27365"/>
<dbReference type="FunCoup" id="O27365">
    <property type="interactions" value="143"/>
</dbReference>
<dbReference type="STRING" id="187420.MTH_1310"/>
<dbReference type="PaxDb" id="187420-MTH_1310"/>
<dbReference type="EnsemblBacteria" id="AAB85788">
    <property type="protein sequence ID" value="AAB85788"/>
    <property type="gene ID" value="MTH_1310"/>
</dbReference>
<dbReference type="KEGG" id="mth:MTH_1310"/>
<dbReference type="PATRIC" id="fig|187420.15.peg.1279"/>
<dbReference type="HOGENOM" id="CLU_114645_3_0_2"/>
<dbReference type="InParanoid" id="O27365"/>
<dbReference type="Proteomes" id="UP000005223">
    <property type="component" value="Chromosome"/>
</dbReference>
<dbReference type="GO" id="GO:1990904">
    <property type="term" value="C:ribonucleoprotein complex"/>
    <property type="evidence" value="ECO:0007669"/>
    <property type="project" value="UniProtKB-KW"/>
</dbReference>
<dbReference type="GO" id="GO:0005840">
    <property type="term" value="C:ribosome"/>
    <property type="evidence" value="ECO:0007669"/>
    <property type="project" value="UniProtKB-KW"/>
</dbReference>
<dbReference type="GO" id="GO:0070180">
    <property type="term" value="F:large ribosomal subunit rRNA binding"/>
    <property type="evidence" value="ECO:0007669"/>
    <property type="project" value="UniProtKB-UniRule"/>
</dbReference>
<dbReference type="GO" id="GO:0003735">
    <property type="term" value="F:structural constituent of ribosome"/>
    <property type="evidence" value="ECO:0007669"/>
    <property type="project" value="InterPro"/>
</dbReference>
<dbReference type="GO" id="GO:0008270">
    <property type="term" value="F:zinc ion binding"/>
    <property type="evidence" value="ECO:0007669"/>
    <property type="project" value="UniProtKB-UniRule"/>
</dbReference>
<dbReference type="GO" id="GO:0006412">
    <property type="term" value="P:translation"/>
    <property type="evidence" value="ECO:0007669"/>
    <property type="project" value="UniProtKB-UniRule"/>
</dbReference>
<dbReference type="Gene3D" id="3.10.450.80">
    <property type="match status" value="1"/>
</dbReference>
<dbReference type="HAMAP" id="MF_01476">
    <property type="entry name" value="Ribosomal_L44e"/>
    <property type="match status" value="1"/>
</dbReference>
<dbReference type="InterPro" id="IPR000552">
    <property type="entry name" value="Ribosomal_eL44"/>
</dbReference>
<dbReference type="InterPro" id="IPR053708">
    <property type="entry name" value="Ribosomal_LSU_eL42"/>
</dbReference>
<dbReference type="InterPro" id="IPR011332">
    <property type="entry name" value="Ribosomal_zn-bd"/>
</dbReference>
<dbReference type="NCBIfam" id="NF004425">
    <property type="entry name" value="PRK05767.1"/>
    <property type="match status" value="1"/>
</dbReference>
<dbReference type="PANTHER" id="PTHR10369">
    <property type="entry name" value="60S RIBOSOMAL PROTEIN L36A/L44"/>
    <property type="match status" value="1"/>
</dbReference>
<dbReference type="Pfam" id="PF00935">
    <property type="entry name" value="Ribosomal_L44"/>
    <property type="match status" value="1"/>
</dbReference>
<dbReference type="SUPFAM" id="SSF57829">
    <property type="entry name" value="Zn-binding ribosomal proteins"/>
    <property type="match status" value="1"/>
</dbReference>
<dbReference type="PROSITE" id="PS01172">
    <property type="entry name" value="RIBOSOMAL_L44E"/>
    <property type="match status" value="1"/>
</dbReference>
<accession>O27365</accession>
<name>RL44E_METTH</name>
<sequence>MKIPKERRTYCPNCRKHTVHEVLESKRRKASELKWGQRQFRRVTAGYRGYPRPLPSGNKPVKKLDLRLKCKECGKSHIKKKSFRAGRVEYVA</sequence>
<proteinExistence type="inferred from homology"/>
<keyword id="KW-0479">Metal-binding</keyword>
<keyword id="KW-1185">Reference proteome</keyword>
<keyword id="KW-0687">Ribonucleoprotein</keyword>
<keyword id="KW-0689">Ribosomal protein</keyword>
<keyword id="KW-0694">RNA-binding</keyword>
<keyword id="KW-0699">rRNA-binding</keyword>
<keyword id="KW-0862">Zinc</keyword>
<keyword id="KW-0863">Zinc-finger</keyword>